<feature type="chain" id="PRO_0000424600" description="Carbonic anhydrase">
    <location>
        <begin position="1"/>
        <end position="281"/>
    </location>
</feature>
<feature type="binding site" evidence="1">
    <location>
        <position position="106"/>
    </location>
    <ligand>
        <name>Zn(2+)</name>
        <dbReference type="ChEBI" id="CHEBI:29105"/>
    </ligand>
</feature>
<feature type="binding site" evidence="1">
    <location>
        <position position="161"/>
    </location>
    <ligand>
        <name>Zn(2+)</name>
        <dbReference type="ChEBI" id="CHEBI:29105"/>
    </ligand>
</feature>
<feature type="binding site" evidence="1">
    <location>
        <position position="164"/>
    </location>
    <ligand>
        <name>Zn(2+)</name>
        <dbReference type="ChEBI" id="CHEBI:29105"/>
    </ligand>
</feature>
<feature type="strand" evidence="16">
    <location>
        <begin position="58"/>
        <end position="60"/>
    </location>
</feature>
<feature type="helix" evidence="16">
    <location>
        <begin position="67"/>
        <end position="85"/>
    </location>
</feature>
<feature type="helix" evidence="16">
    <location>
        <begin position="88"/>
        <end position="95"/>
    </location>
</feature>
<feature type="strand" evidence="16">
    <location>
        <begin position="100"/>
        <end position="106"/>
    </location>
</feature>
<feature type="helix" evidence="16">
    <location>
        <begin position="113"/>
        <end position="116"/>
    </location>
</feature>
<feature type="strand" evidence="16">
    <location>
        <begin position="122"/>
        <end position="128"/>
    </location>
</feature>
<feature type="helix" evidence="16">
    <location>
        <begin position="129"/>
        <end position="131"/>
    </location>
</feature>
<feature type="helix" evidence="16">
    <location>
        <begin position="138"/>
        <end position="149"/>
    </location>
</feature>
<feature type="strand" evidence="16">
    <location>
        <begin position="154"/>
        <end position="161"/>
    </location>
</feature>
<feature type="helix" evidence="16">
    <location>
        <begin position="165"/>
        <end position="171"/>
    </location>
</feature>
<feature type="helix" evidence="16">
    <location>
        <begin position="180"/>
        <end position="183"/>
    </location>
</feature>
<feature type="helix" evidence="16">
    <location>
        <begin position="185"/>
        <end position="192"/>
    </location>
</feature>
<feature type="helix" evidence="16">
    <location>
        <begin position="195"/>
        <end position="199"/>
    </location>
</feature>
<feature type="turn" evidence="16">
    <location>
        <begin position="200"/>
        <end position="203"/>
    </location>
</feature>
<feature type="helix" evidence="16">
    <location>
        <begin position="205"/>
        <end position="225"/>
    </location>
</feature>
<feature type="helix" evidence="16">
    <location>
        <begin position="228"/>
        <end position="235"/>
    </location>
</feature>
<feature type="strand" evidence="16">
    <location>
        <begin position="240"/>
        <end position="246"/>
    </location>
</feature>
<feature type="turn" evidence="16">
    <location>
        <begin position="248"/>
        <end position="250"/>
    </location>
</feature>
<feature type="strand" evidence="16">
    <location>
        <begin position="253"/>
        <end position="256"/>
    </location>
</feature>
<name>CAN_CANAL</name>
<dbReference type="EC" id="4.2.1.1"/>
<dbReference type="EMBL" id="CP017625">
    <property type="protein sequence ID" value="AOW28173.1"/>
    <property type="molecule type" value="Genomic_DNA"/>
</dbReference>
<dbReference type="RefSeq" id="XP_721792.1">
    <property type="nucleotide sequence ID" value="XM_716699.1"/>
</dbReference>
<dbReference type="PDB" id="6GWU">
    <property type="method" value="X-ray"/>
    <property type="resolution" value="2.20 A"/>
    <property type="chains" value="A/B/C/D=56-263"/>
</dbReference>
<dbReference type="PDBsum" id="6GWU"/>
<dbReference type="SMR" id="Q5AJ71"/>
<dbReference type="BioGRID" id="1219715">
    <property type="interactions" value="1"/>
</dbReference>
<dbReference type="FunCoup" id="Q5AJ71">
    <property type="interactions" value="104"/>
</dbReference>
<dbReference type="STRING" id="237561.Q5AJ71"/>
<dbReference type="BindingDB" id="Q5AJ71"/>
<dbReference type="ChEMBL" id="CHEMBL5337"/>
<dbReference type="DrugCentral" id="Q5AJ71"/>
<dbReference type="EnsemblFungi" id="C3_01300C_A-T">
    <property type="protein sequence ID" value="C3_01300C_A-T-p1"/>
    <property type="gene ID" value="C3_01300C_A"/>
</dbReference>
<dbReference type="GeneID" id="3636621"/>
<dbReference type="KEGG" id="cal:CAALFM_C301300CA"/>
<dbReference type="CGD" id="CAL0000198627">
    <property type="gene designation" value="NCE103"/>
</dbReference>
<dbReference type="VEuPathDB" id="FungiDB:C3_01300C_A"/>
<dbReference type="eggNOG" id="KOG1578">
    <property type="taxonomic scope" value="Eukaryota"/>
</dbReference>
<dbReference type="HOGENOM" id="CLU_053879_3_1_1"/>
<dbReference type="InParanoid" id="Q5AJ71"/>
<dbReference type="OrthoDB" id="10248475at2759"/>
<dbReference type="SABIO-RK" id="Q5AJ71"/>
<dbReference type="PRO" id="PR:Q5AJ71"/>
<dbReference type="Proteomes" id="UP000000559">
    <property type="component" value="Chromosome 3"/>
</dbReference>
<dbReference type="GO" id="GO:0005737">
    <property type="term" value="C:cytoplasm"/>
    <property type="evidence" value="ECO:0000318"/>
    <property type="project" value="GO_Central"/>
</dbReference>
<dbReference type="GO" id="GO:0005758">
    <property type="term" value="C:mitochondrial intermembrane space"/>
    <property type="evidence" value="ECO:0007669"/>
    <property type="project" value="UniProtKB-SubCell"/>
</dbReference>
<dbReference type="GO" id="GO:0005634">
    <property type="term" value="C:nucleus"/>
    <property type="evidence" value="ECO:0007669"/>
    <property type="project" value="UniProtKB-SubCell"/>
</dbReference>
<dbReference type="GO" id="GO:0004089">
    <property type="term" value="F:carbonate dehydratase activity"/>
    <property type="evidence" value="ECO:0000314"/>
    <property type="project" value="CGD"/>
</dbReference>
<dbReference type="GO" id="GO:0008270">
    <property type="term" value="F:zinc ion binding"/>
    <property type="evidence" value="ECO:0007669"/>
    <property type="project" value="InterPro"/>
</dbReference>
<dbReference type="GO" id="GO:0015976">
    <property type="term" value="P:carbon utilization"/>
    <property type="evidence" value="ECO:0007669"/>
    <property type="project" value="InterPro"/>
</dbReference>
<dbReference type="GO" id="GO:0071244">
    <property type="term" value="P:cellular response to carbon dioxide"/>
    <property type="evidence" value="ECO:0000318"/>
    <property type="project" value="GO_Central"/>
</dbReference>
<dbReference type="GO" id="GO:0034599">
    <property type="term" value="P:cellular response to oxidative stress"/>
    <property type="evidence" value="ECO:0000318"/>
    <property type="project" value="GO_Central"/>
</dbReference>
<dbReference type="GO" id="GO:0036166">
    <property type="term" value="P:phenotypic switching"/>
    <property type="evidence" value="ECO:0000315"/>
    <property type="project" value="CGD"/>
</dbReference>
<dbReference type="GO" id="GO:1900239">
    <property type="term" value="P:regulation of phenotypic switching"/>
    <property type="evidence" value="ECO:0000315"/>
    <property type="project" value="CGD"/>
</dbReference>
<dbReference type="GO" id="GO:0033660">
    <property type="term" value="P:symbiont-mediated suppression of host resistance gene-dependent defense response"/>
    <property type="evidence" value="ECO:0000315"/>
    <property type="project" value="CGD"/>
</dbReference>
<dbReference type="CDD" id="cd00883">
    <property type="entry name" value="beta_CA_cladeA"/>
    <property type="match status" value="1"/>
</dbReference>
<dbReference type="Gene3D" id="3.40.1050.10">
    <property type="entry name" value="Carbonic anhydrase"/>
    <property type="match status" value="1"/>
</dbReference>
<dbReference type="InterPro" id="IPR001765">
    <property type="entry name" value="Carbonic_anhydrase"/>
</dbReference>
<dbReference type="InterPro" id="IPR015892">
    <property type="entry name" value="Carbonic_anhydrase_CS"/>
</dbReference>
<dbReference type="InterPro" id="IPR036874">
    <property type="entry name" value="Carbonic_anhydrase_sf"/>
</dbReference>
<dbReference type="PANTHER" id="PTHR11002">
    <property type="entry name" value="CARBONIC ANHYDRASE"/>
    <property type="match status" value="1"/>
</dbReference>
<dbReference type="PANTHER" id="PTHR11002:SF76">
    <property type="entry name" value="CARBONIC ANHYDRASE"/>
    <property type="match status" value="1"/>
</dbReference>
<dbReference type="Pfam" id="PF00484">
    <property type="entry name" value="Pro_CA"/>
    <property type="match status" value="1"/>
</dbReference>
<dbReference type="SMART" id="SM00947">
    <property type="entry name" value="Pro_CA"/>
    <property type="match status" value="1"/>
</dbReference>
<dbReference type="SUPFAM" id="SSF53056">
    <property type="entry name" value="beta-carbonic anhydrase, cab"/>
    <property type="match status" value="1"/>
</dbReference>
<dbReference type="PROSITE" id="PS00705">
    <property type="entry name" value="PROK_CO2_ANHYDRASE_2"/>
    <property type="match status" value="1"/>
</dbReference>
<evidence type="ECO:0000250" key="1"/>
<evidence type="ECO:0000269" key="2">
    <source>
    </source>
</evidence>
<evidence type="ECO:0000269" key="3">
    <source>
    </source>
</evidence>
<evidence type="ECO:0000269" key="4">
    <source>
    </source>
</evidence>
<evidence type="ECO:0000269" key="5">
    <source>
    </source>
</evidence>
<evidence type="ECO:0000269" key="6">
    <source>
    </source>
</evidence>
<evidence type="ECO:0000269" key="7">
    <source>
    </source>
</evidence>
<evidence type="ECO:0000269" key="8">
    <source>
    </source>
</evidence>
<evidence type="ECO:0000269" key="9">
    <source>
    </source>
</evidence>
<evidence type="ECO:0000269" key="10">
    <source>
    </source>
</evidence>
<evidence type="ECO:0000269" key="11">
    <source>
    </source>
</evidence>
<evidence type="ECO:0000269" key="12">
    <source>
    </source>
</evidence>
<evidence type="ECO:0000269" key="13">
    <source>
    </source>
</evidence>
<evidence type="ECO:0000269" key="14">
    <source>
    </source>
</evidence>
<evidence type="ECO:0000305" key="15"/>
<evidence type="ECO:0007829" key="16">
    <source>
        <dbReference type="PDB" id="6GWU"/>
    </source>
</evidence>
<gene>
    <name type="primary">NCE103</name>
    <name type="ordered locus">CAALFM_C301300CA</name>
    <name type="ORF">CaO19.1721</name>
    <name type="ORF">CaO19.9289</name>
</gene>
<keyword id="KW-0002">3D-structure</keyword>
<keyword id="KW-0963">Cytoplasm</keyword>
<keyword id="KW-0456">Lyase</keyword>
<keyword id="KW-0479">Metal-binding</keyword>
<keyword id="KW-0496">Mitochondrion</keyword>
<keyword id="KW-0539">Nucleus</keyword>
<keyword id="KW-1185">Reference proteome</keyword>
<keyword id="KW-0843">Virulence</keyword>
<keyword id="KW-0862">Zinc</keyword>
<protein>
    <recommendedName>
        <fullName>Carbonic anhydrase</fullName>
        <ecNumber>4.2.1.1</ecNumber>
    </recommendedName>
    <alternativeName>
        <fullName>Carbonate dehydratase</fullName>
    </alternativeName>
    <alternativeName>
        <fullName>Non-classical export protein 103</fullName>
    </alternativeName>
</protein>
<proteinExistence type="evidence at protein level"/>
<sequence length="281" mass="31591">MGRENILKYQLEHDHESDLVTEKDQSLLLDNNNNLNGMNNTIKTHPVRVSSGNHNNFPFTLSSESTLQDFLNNNKFFVDSIKHNHGNQIFDLNGQGQSPHTLWIGCSDSRAGDQCLATLPGEIFVHRNIANIVNANDISSQGVIQFAIDVLKVKKIIVCGHTDCGGIWASLSKKKIGGVLDLWLNPVRHIRAANLKLLEEYNQDPKLKAKKLAELNVISSVTALKRHPSASVALKKNEIEVWGMLYDVATGYLSQVEIPQDEFEDLFHVHDEHDEEEYNPH</sequence>
<organism>
    <name type="scientific">Candida albicans (strain SC5314 / ATCC MYA-2876)</name>
    <name type="common">Yeast</name>
    <dbReference type="NCBI Taxonomy" id="237561"/>
    <lineage>
        <taxon>Eukaryota</taxon>
        <taxon>Fungi</taxon>
        <taxon>Dikarya</taxon>
        <taxon>Ascomycota</taxon>
        <taxon>Saccharomycotina</taxon>
        <taxon>Pichiomycetes</taxon>
        <taxon>Debaryomycetaceae</taxon>
        <taxon>Candida/Lodderomyces clade</taxon>
        <taxon>Candida</taxon>
    </lineage>
</organism>
<accession>Q5AJ71</accession>
<accession>A0A1D8PJ71</accession>
<comment type="function">
    <text evidence="3 14">Catalyzes the reversible hydration of CO(2) to H(2)CO(3). The main role may be to provide inorganic carbon for the bicarbonate-dependent carboxylation reactions catalyzed by pyruvate carboxylase, acetyl-CoA carboxylase and carbamoyl-phosphate synthetase. Involved in protection against oxidative damage. Acts as a CO(2) chemosensor and induces CO(2)-mediated filamentation. Essential for pathological growth in niches where sufficient CO(2) is not supplied by the host. Necessary for white-to-opaque switching at low CO(2) concentrations.</text>
</comment>
<comment type="catalytic activity">
    <reaction evidence="5 6 7 8 9 10 11 13">
        <text>hydrogencarbonate + H(+) = CO2 + H2O</text>
        <dbReference type="Rhea" id="RHEA:10748"/>
        <dbReference type="ChEBI" id="CHEBI:15377"/>
        <dbReference type="ChEBI" id="CHEBI:15378"/>
        <dbReference type="ChEBI" id="CHEBI:16526"/>
        <dbReference type="ChEBI" id="CHEBI:17544"/>
        <dbReference type="EC" id="4.2.1.1"/>
    </reaction>
</comment>
<comment type="cofactor">
    <cofactor evidence="1">
        <name>Zn(2+)</name>
        <dbReference type="ChEBI" id="CHEBI:29105"/>
    </cofactor>
    <text evidence="1">Binds 1 zinc ion per subunit.</text>
</comment>
<comment type="activity regulation">
    <text evidence="5 6 7 8 9 10 11 13">Amines and amino acids act as activators of catalytic activity, whereas natural product-based phenols, dithiocarbamates, aliphatic and aromatic carboxylates, boronic acids, and sulfonamides act as inhibitors of enzymatic activity. Also inhibited by anions such as cyanide and carbonate, and to a lesser extent by sulfate, phenylboronic, and phenyl arsonic acid.</text>
</comment>
<comment type="biophysicochemical properties">
    <kinetics>
        <KM evidence="9">8.2 mM for CO(2)</KM>
    </kinetics>
</comment>
<comment type="subcellular location">
    <subcellularLocation>
        <location>Cytoplasm</location>
    </subcellularLocation>
    <subcellularLocation>
        <location>Nucleus</location>
    </subcellularLocation>
    <subcellularLocation>
        <location>Mitochondrion intermembrane space</location>
    </subcellularLocation>
</comment>
<comment type="induction">
    <text evidence="2 4 12 14">Strongly expressed when cells are grown in ambient air but non-detectable when cultured in air enriched with CO(2). Up-regulated by MNL1, HAP43, RCA1, and during early stages of biofilm development.</text>
</comment>
<comment type="similarity">
    <text evidence="15">Belongs to the beta-class carbonic anhydrase family.</text>
</comment>
<reference key="1">
    <citation type="journal article" date="2004" name="Proc. Natl. Acad. Sci. U.S.A.">
        <title>The diploid genome sequence of Candida albicans.</title>
        <authorList>
            <person name="Jones T."/>
            <person name="Federspiel N.A."/>
            <person name="Chibana H."/>
            <person name="Dungan J."/>
            <person name="Kalman S."/>
            <person name="Magee B.B."/>
            <person name="Newport G."/>
            <person name="Thorstenson Y.R."/>
            <person name="Agabian N."/>
            <person name="Magee P.T."/>
            <person name="Davis R.W."/>
            <person name="Scherer S."/>
        </authorList>
    </citation>
    <scope>NUCLEOTIDE SEQUENCE [LARGE SCALE GENOMIC DNA]</scope>
    <source>
        <strain>SC5314 / ATCC MYA-2876</strain>
    </source>
</reference>
<reference key="2">
    <citation type="journal article" date="2007" name="Genome Biol.">
        <title>Assembly of the Candida albicans genome into sixteen supercontigs aligned on the eight chromosomes.</title>
        <authorList>
            <person name="van het Hoog M."/>
            <person name="Rast T.J."/>
            <person name="Martchenko M."/>
            <person name="Grindle S."/>
            <person name="Dignard D."/>
            <person name="Hogues H."/>
            <person name="Cuomo C."/>
            <person name="Berriman M."/>
            <person name="Scherer S."/>
            <person name="Magee B.B."/>
            <person name="Whiteway M."/>
            <person name="Chibana H."/>
            <person name="Nantel A."/>
            <person name="Magee P.T."/>
        </authorList>
    </citation>
    <scope>GENOME REANNOTATION</scope>
    <source>
        <strain>SC5314 / ATCC MYA-2876</strain>
    </source>
</reference>
<reference key="3">
    <citation type="journal article" date="2013" name="Genome Biol.">
        <title>Assembly of a phased diploid Candida albicans genome facilitates allele-specific measurements and provides a simple model for repeat and indel structure.</title>
        <authorList>
            <person name="Muzzey D."/>
            <person name="Schwartz K."/>
            <person name="Weissman J.S."/>
            <person name="Sherlock G."/>
        </authorList>
    </citation>
    <scope>NUCLEOTIDE SEQUENCE [LARGE SCALE GENOMIC DNA]</scope>
    <scope>GENOME REANNOTATION</scope>
    <source>
        <strain>SC5314 / ATCC MYA-2876</strain>
    </source>
</reference>
<reference key="4">
    <citation type="journal article" date="2005" name="Curr. Biol.">
        <title>Fungal adenylyl cyclase integrates CO2 sensing with cAMP signaling and virulence.</title>
        <authorList>
            <person name="Klengel T."/>
            <person name="Liang W.J."/>
            <person name="Chaloupka J."/>
            <person name="Ruoff C."/>
            <person name="Schroppel K."/>
            <person name="Naglik J.R."/>
            <person name="Eckert S.E."/>
            <person name="Mogensen E.G."/>
            <person name="Haynes K."/>
            <person name="Tuite M.F."/>
            <person name="Levin L.R."/>
            <person name="Buck J."/>
            <person name="Muhlschlegel F.A."/>
        </authorList>
    </citation>
    <scope>FUNCTION</scope>
</reference>
<reference key="5">
    <citation type="journal article" date="2005" name="Eukaryot. Cell">
        <title>Genome-wide transcription profiling of the early phase of biofilm formation by Candida albicans.</title>
        <authorList>
            <person name="Murillo L.A."/>
            <person name="Newport G."/>
            <person name="Lan C.Y."/>
            <person name="Habelitz S."/>
            <person name="Dungan J."/>
            <person name="Agabian N.M."/>
        </authorList>
    </citation>
    <scope>INDUCTION</scope>
</reference>
<reference key="6">
    <citation type="journal article" date="2008" name="Bioorg. Med. Chem. Lett.">
        <title>Carbonic anhydrase inhibitors: inhibition of the beta-class enzymes from the fungal pathogens Candida albicans and Cryptococcus neoformans with simple anions.</title>
        <authorList>
            <person name="Innocenti A."/>
            <person name="Muhlschlegel F.A."/>
            <person name="Hall R.A."/>
            <person name="Steegborn C."/>
            <person name="Scozzafava A."/>
            <person name="Supuran C.T."/>
        </authorList>
    </citation>
    <scope>CATALYTIC ACTIVITY</scope>
    <scope>ACTIVITY REGULATION</scope>
</reference>
<reference key="7">
    <citation type="journal article" date="2008" name="Mol. Biol. Cell">
        <title>MNL1 regulates weak acid-induced stress responses of the fungal pathogen Candida albicans.</title>
        <authorList>
            <person name="Ramsdale M."/>
            <person name="Selway L."/>
            <person name="Stead D."/>
            <person name="Walker J."/>
            <person name="Yin Z."/>
            <person name="Nicholls S.M."/>
            <person name="Crowe J."/>
            <person name="Sheils E.M."/>
            <person name="Brown A.J."/>
        </authorList>
    </citation>
    <scope>INDUCTION</scope>
</reference>
<reference key="8">
    <citation type="journal article" date="2009" name="Bioorg. Med. Chem.">
        <title>Carbonic anhydrase inhibitors. Inhibition of the beta-class enzymes from the fungal pathogens Candida albicans and Cryptococcus neoformans with aliphatic and aromatic carboxylates.</title>
        <authorList>
            <person name="Innocenti A."/>
            <person name="Hall R.A."/>
            <person name="Schlicker C."/>
            <person name="Muhlschlegel F.A."/>
            <person name="Supuran C.T."/>
        </authorList>
    </citation>
    <scope>CATALYTIC ACTIVITY</scope>
    <scope>ACTIVITY REGULATION</scope>
</reference>
<reference key="9">
    <citation type="journal article" date="2009" name="Bioorg. Med. Chem.">
        <title>Carbonic anhydrase inhibitors. Inhibition and homology modeling studies of the fungal beta-carbonic anhydrase from Candida albicans with sulfonamides.</title>
        <authorList>
            <person name="Innocenti A."/>
            <person name="Hall R.A."/>
            <person name="Schlicker C."/>
            <person name="Scozzafava A."/>
            <person name="Steegborn C."/>
            <person name="Muhlschlegel F.A."/>
            <person name="Supuran C.T."/>
        </authorList>
    </citation>
    <scope>CATALYTIC ACTIVITY</scope>
    <scope>ACTIVITY REGULATION</scope>
</reference>
<reference key="10">
    <citation type="journal article" date="2009" name="Bioorg. Med. Chem. Lett.">
        <title>Carbonic anhydrase inhibitors. Inhibition of the fungal beta-carbonic anhydrases from Candida albicans and Cryptococcus neoformans with boronic acids.</title>
        <authorList>
            <person name="Innocenti A."/>
            <person name="Winum J.Y."/>
            <person name="Hall R.A."/>
            <person name="Muhlschlegel F.A."/>
            <person name="Scozzafava A."/>
            <person name="Supuran C.T."/>
        </authorList>
    </citation>
    <scope>CATALYTIC ACTIVITY</scope>
    <scope>ACTIVITY REGULATION</scope>
</reference>
<reference key="11">
    <citation type="journal article" date="2010" name="Bioorg. Med. Chem.">
        <title>Carbonic anhydrase activators: activation of the beta-carbonic anhydrases from the pathogenic fungi Candida albicans and Cryptococcus neoformans with amines and amino acids.</title>
        <authorList>
            <person name="Innocenti A."/>
            <person name="Hall R.A."/>
            <person name="Scozzafava A."/>
            <person name="Muhlschlegel F.A."/>
            <person name="Supuran C.T."/>
        </authorList>
    </citation>
    <scope>CATALYTIC ACTIVITY</scope>
    <scope>ACTIVITY REGULATION</scope>
    <scope>BIOPHYSICOCHEMICAL PROPERTIES</scope>
</reference>
<reference key="12">
    <citation type="journal article" date="2010" name="Bioorg. Med. Chem. Lett.">
        <title>Carbonic anhydrase inhibitors. The beta-carbonic anhydrases from the fungal pathogens Cryptococcus neoformans and Candida albicans are strongly inhibited by substituted-phenyl-1H-indole-5-sulfonamides.</title>
        <authorList>
            <person name="Guzel O."/>
            <person name="Maresca A."/>
            <person name="Hall R.A."/>
            <person name="Scozzafava A."/>
            <person name="Mastrolorenzo A."/>
            <person name="Muhlschlegel F.A."/>
            <person name="Supuran C.T."/>
        </authorList>
    </citation>
    <scope>CATALYTIC ACTIVITY</scope>
    <scope>ACTIVITY REGULATION</scope>
</reference>
<reference key="13">
    <citation type="journal article" date="2011" name="J. Biol. Chem.">
        <title>Cap2-HAP complex is a critical transcriptional regulator that has dual but contrasting roles in regulation of iron homeostasis in Candida albicans.</title>
        <authorList>
            <person name="Singh R.P."/>
            <person name="Prasad H.K."/>
            <person name="Sinha I."/>
            <person name="Agarwal N."/>
            <person name="Natarajan K."/>
        </authorList>
    </citation>
    <scope>INDUCTION</scope>
</reference>
<reference key="14">
    <citation type="journal article" date="2011" name="J. Med. Chem.">
        <title>Natural product-based phenols as novel probes for mycobacterial and fungal carbonic anhydrases.</title>
        <authorList>
            <person name="Davis R.A."/>
            <person name="Hofmann A."/>
            <person name="Osman A."/>
            <person name="Hall R.A."/>
            <person name="Muhlschlegel F.A."/>
            <person name="Vullo D."/>
            <person name="Innocenti A."/>
            <person name="Supuran C.T."/>
            <person name="Poulsen S.A."/>
        </authorList>
    </citation>
    <scope>CATALYTIC ACTIVITY</scope>
    <scope>ACTIVITY REGULATION</scope>
</reference>
<reference key="15">
    <citation type="journal article" date="2012" name="Bioorg. Med. Chem. Lett.">
        <title>Dithiocarbamates are strong inhibitors of the beta-class fungal carbonic anhydrases from Cryptococcus neoformans, Candida albicans and Candida glabrata.</title>
        <authorList>
            <person name="Monti S.M."/>
            <person name="Maresca A."/>
            <person name="Viparelli F."/>
            <person name="Carta F."/>
            <person name="De Simone G."/>
            <person name="Muhlschlegel F.A."/>
            <person name="Scozzafava A."/>
            <person name="Supuran C.T."/>
        </authorList>
    </citation>
    <scope>CATALYTIC ACTIVITY</scope>
    <scope>ACTIVITY REGULATION</scope>
</reference>
<reference key="16">
    <citation type="journal article" date="2012" name="PLoS Pathog.">
        <title>The bZIP transcription factor Rca1p is a central regulator of a novel CO(2) sensing pathway in yeast.</title>
        <authorList>
            <person name="Cottier F."/>
            <person name="Raymond M."/>
            <person name="Kurzai O."/>
            <person name="Bolstad M."/>
            <person name="Leewattanapasuk W."/>
            <person name="Jimenez-Lopez C."/>
            <person name="Lorenz M.C."/>
            <person name="Sanglard D."/>
            <person name="Vachova L."/>
            <person name="Pavelka N."/>
            <person name="Palkova Z."/>
            <person name="Muhlschlegel F.A."/>
        </authorList>
    </citation>
    <scope>INDUCTION</scope>
    <scope>FUNCTION</scope>
</reference>